<proteinExistence type="inferred from homology"/>
<protein>
    <recommendedName>
        <fullName>Vacuolar protein sorting-associated protein 51 homolog</fullName>
    </recommendedName>
    <alternativeName>
        <fullName>Protein fat-free homolog</fullName>
    </alternativeName>
</protein>
<sequence length="917" mass="103808">MSQSISDIKLVKFYYRHYKLGPQDFCREYGGNVDGLNKFLTGNYDSLAARDALRSFWERFNTNQLMKSQAGDEDDGDEFNSTFGGGDSMLLSPIKVTSPMSSSSSSTNTTNSNGQIIGNRSFSSLAEATSNATTTTTSTTTTGGKPESKRVRNLLKTYYGPGIGEGSDSSSMNDPLNIDGPSFNLNSYFDSIVKSSTLNQLIQKDNQMVSEIRTLDGDMKTLVYDNYTKFINATDIIKKMKTNVENMEEGMALLSKNMDLITNCSEKINSTLSVRRDRIDQLSGLQKFFQKLQFLTALPSSLNHCLAMQAYNQAVRYYNSNSGILKQYSHIPSFQNIQNECDSIMKTMKDKLYERLSSLSTSQTDCVESAEVLMDLLEPVELVRSKYLESRKHHTITLLENLEKKSVEHITDYIKELNANFLSEYSYNITSYKSLFINRLDGSDSKKERQQSLLQLEDFSKDLFNKYLNIAKSKLSSFKDPIEKIMALEIINSDVSRLGSELSSHEKITNIINSTVHDQIDFYFDNLQKTIKEHIHQLNSTLNERRDEVLEGHNLQELSDATSKAIVNDIILLFANLKPFFLPTETQFLSSYQDTIFTKIQVKLQQFFLFLVNIHFLEYLDIIATTSNREQFSGRFLLVLSSICLYFENKGITLVVQLMSEFITVAKQGAKKELNVFSFNAPDLCKRVRETGLQILNVFTRLSSQKLDKILKKGLESIPNNNWLVLKEPRDVRSVNDIYLEEILKFQNETSKLLPVINHHHHSLKSHSRTGSGGNSVSSNNSSSNTPDGHRRNPSASSSSSSNNTNTTLFEKKVDHVDFNTLSVLIAIIKLSLKSFNESLRLKTFGTNGCHQIQIDLHYLKLSLYDLFGSNSFDNLLQECENTVTERCVDPLPLAKSIVSKICETKMNKKKNNEAES</sequence>
<evidence type="ECO:0000250" key="1"/>
<evidence type="ECO:0000255" key="2"/>
<evidence type="ECO:0000256" key="3">
    <source>
        <dbReference type="SAM" id="MobiDB-lite"/>
    </source>
</evidence>
<evidence type="ECO:0000305" key="4"/>
<gene>
    <name type="primary">vps51</name>
    <name type="synonym">ffr</name>
    <name type="ORF">DDB_G0287445</name>
</gene>
<accession>Q54KG3</accession>
<comment type="function">
    <text evidence="1">May act as component of the GARP complex that is involved in retrograde transport from early and late endosomes to the trans-Golgi network (TGN).</text>
</comment>
<comment type="subunit">
    <text evidence="1">Component of the Golgi-associated retrograde protein (GARP) complex.</text>
</comment>
<comment type="similarity">
    <text evidence="4">Belongs to the VPS51 family.</text>
</comment>
<reference key="1">
    <citation type="journal article" date="2005" name="Nature">
        <title>The genome of the social amoeba Dictyostelium discoideum.</title>
        <authorList>
            <person name="Eichinger L."/>
            <person name="Pachebat J.A."/>
            <person name="Gloeckner G."/>
            <person name="Rajandream M.A."/>
            <person name="Sucgang R."/>
            <person name="Berriman M."/>
            <person name="Song J."/>
            <person name="Olsen R."/>
            <person name="Szafranski K."/>
            <person name="Xu Q."/>
            <person name="Tunggal B."/>
            <person name="Kummerfeld S."/>
            <person name="Madera M."/>
            <person name="Konfortov B.A."/>
            <person name="Rivero F."/>
            <person name="Bankier A.T."/>
            <person name="Lehmann R."/>
            <person name="Hamlin N."/>
            <person name="Davies R."/>
            <person name="Gaudet P."/>
            <person name="Fey P."/>
            <person name="Pilcher K."/>
            <person name="Chen G."/>
            <person name="Saunders D."/>
            <person name="Sodergren E.J."/>
            <person name="Davis P."/>
            <person name="Kerhornou A."/>
            <person name="Nie X."/>
            <person name="Hall N."/>
            <person name="Anjard C."/>
            <person name="Hemphill L."/>
            <person name="Bason N."/>
            <person name="Farbrother P."/>
            <person name="Desany B."/>
            <person name="Just E."/>
            <person name="Morio T."/>
            <person name="Rost R."/>
            <person name="Churcher C.M."/>
            <person name="Cooper J."/>
            <person name="Haydock S."/>
            <person name="van Driessche N."/>
            <person name="Cronin A."/>
            <person name="Goodhead I."/>
            <person name="Muzny D.M."/>
            <person name="Mourier T."/>
            <person name="Pain A."/>
            <person name="Lu M."/>
            <person name="Harper D."/>
            <person name="Lindsay R."/>
            <person name="Hauser H."/>
            <person name="James K.D."/>
            <person name="Quiles M."/>
            <person name="Madan Babu M."/>
            <person name="Saito T."/>
            <person name="Buchrieser C."/>
            <person name="Wardroper A."/>
            <person name="Felder M."/>
            <person name="Thangavelu M."/>
            <person name="Johnson D."/>
            <person name="Knights A."/>
            <person name="Loulseged H."/>
            <person name="Mungall K.L."/>
            <person name="Oliver K."/>
            <person name="Price C."/>
            <person name="Quail M.A."/>
            <person name="Urushihara H."/>
            <person name="Hernandez J."/>
            <person name="Rabbinowitsch E."/>
            <person name="Steffen D."/>
            <person name="Sanders M."/>
            <person name="Ma J."/>
            <person name="Kohara Y."/>
            <person name="Sharp S."/>
            <person name="Simmonds M.N."/>
            <person name="Spiegler S."/>
            <person name="Tivey A."/>
            <person name="Sugano S."/>
            <person name="White B."/>
            <person name="Walker D."/>
            <person name="Woodward J.R."/>
            <person name="Winckler T."/>
            <person name="Tanaka Y."/>
            <person name="Shaulsky G."/>
            <person name="Schleicher M."/>
            <person name="Weinstock G.M."/>
            <person name="Rosenthal A."/>
            <person name="Cox E.C."/>
            <person name="Chisholm R.L."/>
            <person name="Gibbs R.A."/>
            <person name="Loomis W.F."/>
            <person name="Platzer M."/>
            <person name="Kay R.R."/>
            <person name="Williams J.G."/>
            <person name="Dear P.H."/>
            <person name="Noegel A.A."/>
            <person name="Barrell B.G."/>
            <person name="Kuspa A."/>
        </authorList>
    </citation>
    <scope>NUCLEOTIDE SEQUENCE [LARGE SCALE GENOMIC DNA]</scope>
    <source>
        <strain>AX4</strain>
    </source>
</reference>
<organism>
    <name type="scientific">Dictyostelium discoideum</name>
    <name type="common">Social amoeba</name>
    <dbReference type="NCBI Taxonomy" id="44689"/>
    <lineage>
        <taxon>Eukaryota</taxon>
        <taxon>Amoebozoa</taxon>
        <taxon>Evosea</taxon>
        <taxon>Eumycetozoa</taxon>
        <taxon>Dictyostelia</taxon>
        <taxon>Dictyosteliales</taxon>
        <taxon>Dictyosteliaceae</taxon>
        <taxon>Dictyostelium</taxon>
    </lineage>
</organism>
<name>VPS51_DICDI</name>
<keyword id="KW-0175">Coiled coil</keyword>
<keyword id="KW-1185">Reference proteome</keyword>
<feature type="chain" id="PRO_0000356838" description="Vacuolar protein sorting-associated protein 51 homolog">
    <location>
        <begin position="1"/>
        <end position="917"/>
    </location>
</feature>
<feature type="region of interest" description="Disordered" evidence="3">
    <location>
        <begin position="94"/>
        <end position="151"/>
    </location>
</feature>
<feature type="region of interest" description="Disordered" evidence="3">
    <location>
        <begin position="760"/>
        <end position="805"/>
    </location>
</feature>
<feature type="coiled-coil region" evidence="2">
    <location>
        <begin position="229"/>
        <end position="259"/>
    </location>
</feature>
<feature type="coiled-coil region" evidence="2">
    <location>
        <begin position="524"/>
        <end position="547"/>
    </location>
</feature>
<feature type="compositionally biased region" description="Low complexity" evidence="3">
    <location>
        <begin position="101"/>
        <end position="113"/>
    </location>
</feature>
<feature type="compositionally biased region" description="Polar residues" evidence="3">
    <location>
        <begin position="114"/>
        <end position="127"/>
    </location>
</feature>
<feature type="compositionally biased region" description="Low complexity" evidence="3">
    <location>
        <begin position="128"/>
        <end position="142"/>
    </location>
</feature>
<feature type="compositionally biased region" description="Low complexity" evidence="3">
    <location>
        <begin position="775"/>
        <end position="785"/>
    </location>
</feature>
<dbReference type="EMBL" id="AAFI02000100">
    <property type="protein sequence ID" value="EAL63790.1"/>
    <property type="molecule type" value="Genomic_DNA"/>
</dbReference>
<dbReference type="RefSeq" id="XP_637260.1">
    <property type="nucleotide sequence ID" value="XM_632168.1"/>
</dbReference>
<dbReference type="SMR" id="Q54KG3"/>
<dbReference type="FunCoup" id="Q54KG3">
    <property type="interactions" value="186"/>
</dbReference>
<dbReference type="STRING" id="44689.Q54KG3"/>
<dbReference type="PaxDb" id="44689-DDB0233907"/>
<dbReference type="EnsemblProtists" id="EAL63790">
    <property type="protein sequence ID" value="EAL63790"/>
    <property type="gene ID" value="DDB_G0287445"/>
</dbReference>
<dbReference type="GeneID" id="8626090"/>
<dbReference type="KEGG" id="ddi:DDB_G0287445"/>
<dbReference type="dictyBase" id="DDB_G0287445"/>
<dbReference type="VEuPathDB" id="AmoebaDB:DDB_G0287445"/>
<dbReference type="eggNOG" id="KOG2346">
    <property type="taxonomic scope" value="Eukaryota"/>
</dbReference>
<dbReference type="HOGENOM" id="CLU_020677_0_0_1"/>
<dbReference type="InParanoid" id="Q54KG3"/>
<dbReference type="OMA" id="DIICERG"/>
<dbReference type="PhylomeDB" id="Q54KG3"/>
<dbReference type="PRO" id="PR:Q54KG3"/>
<dbReference type="Proteomes" id="UP000002195">
    <property type="component" value="Chromosome 5"/>
</dbReference>
<dbReference type="GO" id="GO:0005829">
    <property type="term" value="C:cytosol"/>
    <property type="evidence" value="ECO:0007669"/>
    <property type="project" value="GOC"/>
</dbReference>
<dbReference type="GO" id="GO:1990745">
    <property type="term" value="C:EARP complex"/>
    <property type="evidence" value="ECO:0000318"/>
    <property type="project" value="GO_Central"/>
</dbReference>
<dbReference type="GO" id="GO:0000938">
    <property type="term" value="C:GARP complex"/>
    <property type="evidence" value="ECO:0000318"/>
    <property type="project" value="GO_Central"/>
</dbReference>
<dbReference type="GO" id="GO:0016020">
    <property type="term" value="C:membrane"/>
    <property type="evidence" value="ECO:0000318"/>
    <property type="project" value="GO_Central"/>
</dbReference>
<dbReference type="GO" id="GO:0032456">
    <property type="term" value="P:endocytic recycling"/>
    <property type="evidence" value="ECO:0000318"/>
    <property type="project" value="GO_Central"/>
</dbReference>
<dbReference type="GO" id="GO:0007030">
    <property type="term" value="P:Golgi organization"/>
    <property type="evidence" value="ECO:0000318"/>
    <property type="project" value="GO_Central"/>
</dbReference>
<dbReference type="GO" id="GO:0048193">
    <property type="term" value="P:Golgi vesicle transport"/>
    <property type="evidence" value="ECO:0000318"/>
    <property type="project" value="GO_Central"/>
</dbReference>
<dbReference type="GO" id="GO:0007041">
    <property type="term" value="P:lysosomal transport"/>
    <property type="evidence" value="ECO:0000318"/>
    <property type="project" value="GO_Central"/>
</dbReference>
<dbReference type="GO" id="GO:0042147">
    <property type="term" value="P:retrograde transport, endosome to Golgi"/>
    <property type="evidence" value="ECO:0000318"/>
    <property type="project" value="GO_Central"/>
</dbReference>
<dbReference type="InterPro" id="IPR016159">
    <property type="entry name" value="Cullin_repeat-like_dom_sf"/>
</dbReference>
<dbReference type="InterPro" id="IPR014812">
    <property type="entry name" value="Vps51"/>
</dbReference>
<dbReference type="PANTHER" id="PTHR15954">
    <property type="entry name" value="VACUOLAR PROTEIN SORTING-ASSOCIATED PROTEIN 51 HOMOLOG"/>
    <property type="match status" value="1"/>
</dbReference>
<dbReference type="PANTHER" id="PTHR15954:SF4">
    <property type="entry name" value="VACUOLAR PROTEIN SORTING-ASSOCIATED PROTEIN 51 HOMOLOG"/>
    <property type="match status" value="1"/>
</dbReference>
<dbReference type="Pfam" id="PF08700">
    <property type="entry name" value="VPS51_Exo84_N"/>
    <property type="match status" value="1"/>
</dbReference>
<dbReference type="SUPFAM" id="SSF74788">
    <property type="entry name" value="Cullin repeat-like"/>
    <property type="match status" value="1"/>
</dbReference>